<organism>
    <name type="scientific">Dictyostelium discoideum</name>
    <name type="common">Social amoeba</name>
    <dbReference type="NCBI Taxonomy" id="44689"/>
    <lineage>
        <taxon>Eukaryota</taxon>
        <taxon>Amoebozoa</taxon>
        <taxon>Evosea</taxon>
        <taxon>Eumycetozoa</taxon>
        <taxon>Dictyostelia</taxon>
        <taxon>Dictyosteliales</taxon>
        <taxon>Dictyosteliaceae</taxon>
        <taxon>Dictyostelium</taxon>
    </lineage>
</organism>
<evidence type="ECO:0000250" key="1"/>
<evidence type="ECO:0000255" key="2">
    <source>
        <dbReference type="PROSITE-ProRule" id="PRU00808"/>
    </source>
</evidence>
<name>PSA5_DICDI</name>
<proteinExistence type="inferred from homology"/>
<sequence length="241" mass="26687">MFLTRSEYDRGVNTFSPEGRLFQVEYALEAIKLGIGVQCEEGVVLAVEKRLTSPLLEPSSIQKVVEIDYHLICALSGLVADARTIIDHARIETQNHRFNYNEPMGVESCVQSICDLALRFGENRNSGEERMSRPFGVALLIAGIDEKGPSLYYSDPSGTFTQFHAKAIGAGSEGAQTTLQEKYSKTLTIAECQKLALTTLKQVMEEAITTTNVELAVITKADQKFKIYNKEELATVIQTLE</sequence>
<dbReference type="EMBL" id="AAFI02000003">
    <property type="protein sequence ID" value="EAL73722.1"/>
    <property type="molecule type" value="Genomic_DNA"/>
</dbReference>
<dbReference type="RefSeq" id="XP_647379.1">
    <property type="nucleotide sequence ID" value="XM_642287.1"/>
</dbReference>
<dbReference type="SMR" id="Q55G04"/>
<dbReference type="FunCoup" id="Q55G04">
    <property type="interactions" value="950"/>
</dbReference>
<dbReference type="STRING" id="44689.Q55G04"/>
<dbReference type="MEROPS" id="T01.975"/>
<dbReference type="PaxDb" id="44689-DDB0232930"/>
<dbReference type="EnsemblProtists" id="EAL73722">
    <property type="protein sequence ID" value="EAL73722"/>
    <property type="gene ID" value="DDB_G0268538"/>
</dbReference>
<dbReference type="GeneID" id="8616188"/>
<dbReference type="KEGG" id="ddi:DDB_G0268538"/>
<dbReference type="dictyBase" id="DDB_G0268538">
    <property type="gene designation" value="psmA5"/>
</dbReference>
<dbReference type="VEuPathDB" id="AmoebaDB:DDB_G0268538"/>
<dbReference type="eggNOG" id="KOG0176">
    <property type="taxonomic scope" value="Eukaryota"/>
</dbReference>
<dbReference type="HOGENOM" id="CLU_035750_4_2_1"/>
<dbReference type="InParanoid" id="Q55G04"/>
<dbReference type="OMA" id="RSMIDHA"/>
<dbReference type="PhylomeDB" id="Q55G04"/>
<dbReference type="Reactome" id="R-DDI-1236978">
    <property type="pathway name" value="Cross-presentation of soluble exogenous antigens (endosomes)"/>
</dbReference>
<dbReference type="Reactome" id="R-DDI-174084">
    <property type="pathway name" value="Autodegradation of Cdh1 by Cdh1:APC/C"/>
</dbReference>
<dbReference type="Reactome" id="R-DDI-174154">
    <property type="pathway name" value="APC/C:Cdc20 mediated degradation of Securin"/>
</dbReference>
<dbReference type="Reactome" id="R-DDI-174178">
    <property type="pathway name" value="APC/C:Cdh1 mediated degradation of Cdc20 and other APC/C:Cdh1 targeted proteins in late mitosis/early G1"/>
</dbReference>
<dbReference type="Reactome" id="R-DDI-2467813">
    <property type="pathway name" value="Separation of Sister Chromatids"/>
</dbReference>
<dbReference type="Reactome" id="R-DDI-349425">
    <property type="pathway name" value="Autodegradation of the E3 ubiquitin ligase COP1"/>
</dbReference>
<dbReference type="Reactome" id="R-DDI-382556">
    <property type="pathway name" value="ABC-family proteins mediated transport"/>
</dbReference>
<dbReference type="Reactome" id="R-DDI-450408">
    <property type="pathway name" value="AUF1 (hnRNP D0) binds and destabilizes mRNA"/>
</dbReference>
<dbReference type="Reactome" id="R-DDI-4641258">
    <property type="pathway name" value="Degradation of DVL"/>
</dbReference>
<dbReference type="Reactome" id="R-DDI-5632684">
    <property type="pathway name" value="Hedgehog 'on' state"/>
</dbReference>
<dbReference type="Reactome" id="R-DDI-5658442">
    <property type="pathway name" value="Regulation of RAS by GAPs"/>
</dbReference>
<dbReference type="Reactome" id="R-DDI-5687128">
    <property type="pathway name" value="MAPK6/MAPK4 signaling"/>
</dbReference>
<dbReference type="Reactome" id="R-DDI-5689603">
    <property type="pathway name" value="UCH proteinases"/>
</dbReference>
<dbReference type="Reactome" id="R-DDI-5689880">
    <property type="pathway name" value="Ub-specific processing proteases"/>
</dbReference>
<dbReference type="Reactome" id="R-DDI-6798695">
    <property type="pathway name" value="Neutrophil degranulation"/>
</dbReference>
<dbReference type="Reactome" id="R-DDI-68949">
    <property type="pathway name" value="Orc1 removal from chromatin"/>
</dbReference>
<dbReference type="Reactome" id="R-DDI-69017">
    <property type="pathway name" value="CDK-mediated phosphorylation and removal of Cdc6"/>
</dbReference>
<dbReference type="Reactome" id="R-DDI-69601">
    <property type="pathway name" value="Ubiquitin Mediated Degradation of Phosphorylated Cdc25A"/>
</dbReference>
<dbReference type="Reactome" id="R-DDI-8854050">
    <property type="pathway name" value="FBXL7 down-regulates AURKA during mitotic entry and in early mitosis"/>
</dbReference>
<dbReference type="Reactome" id="R-DDI-8948751">
    <property type="pathway name" value="Regulation of PTEN stability and activity"/>
</dbReference>
<dbReference type="Reactome" id="R-DDI-8951664">
    <property type="pathway name" value="Neddylation"/>
</dbReference>
<dbReference type="Reactome" id="R-DDI-9755511">
    <property type="pathway name" value="KEAP1-NFE2L2 pathway"/>
</dbReference>
<dbReference type="Reactome" id="R-DDI-983168">
    <property type="pathway name" value="Antigen processing: Ubiquitination &amp; Proteasome degradation"/>
</dbReference>
<dbReference type="Reactome" id="R-DDI-9907900">
    <property type="pathway name" value="Proteasome assembly"/>
</dbReference>
<dbReference type="PRO" id="PR:Q55G04"/>
<dbReference type="Proteomes" id="UP000002195">
    <property type="component" value="Chromosome 1"/>
</dbReference>
<dbReference type="GO" id="GO:0005737">
    <property type="term" value="C:cytoplasm"/>
    <property type="evidence" value="ECO:0000353"/>
    <property type="project" value="dictyBase"/>
</dbReference>
<dbReference type="GO" id="GO:0031012">
    <property type="term" value="C:extracellular matrix"/>
    <property type="evidence" value="ECO:0007005"/>
    <property type="project" value="dictyBase"/>
</dbReference>
<dbReference type="GO" id="GO:0005634">
    <property type="term" value="C:nucleus"/>
    <property type="evidence" value="ECO:0000353"/>
    <property type="project" value="dictyBase"/>
</dbReference>
<dbReference type="GO" id="GO:0019773">
    <property type="term" value="C:proteasome core complex, alpha-subunit complex"/>
    <property type="evidence" value="ECO:0000314"/>
    <property type="project" value="dictyBase"/>
</dbReference>
<dbReference type="GO" id="GO:0010498">
    <property type="term" value="P:proteasomal protein catabolic process"/>
    <property type="evidence" value="ECO:0000314"/>
    <property type="project" value="dictyBase"/>
</dbReference>
<dbReference type="GO" id="GO:0043161">
    <property type="term" value="P:proteasome-mediated ubiquitin-dependent protein catabolic process"/>
    <property type="evidence" value="ECO:0000318"/>
    <property type="project" value="GO_Central"/>
</dbReference>
<dbReference type="CDD" id="cd03753">
    <property type="entry name" value="proteasome_alpha_type_5"/>
    <property type="match status" value="1"/>
</dbReference>
<dbReference type="FunFam" id="3.60.20.10:FF:000015">
    <property type="entry name" value="Proteasome subunit alpha type-5"/>
    <property type="match status" value="1"/>
</dbReference>
<dbReference type="Gene3D" id="3.60.20.10">
    <property type="entry name" value="Glutamine Phosphoribosylpyrophosphate, subunit 1, domain 1"/>
    <property type="match status" value="1"/>
</dbReference>
<dbReference type="InterPro" id="IPR029055">
    <property type="entry name" value="Ntn_hydrolases_N"/>
</dbReference>
<dbReference type="InterPro" id="IPR050115">
    <property type="entry name" value="Proteasome_alpha"/>
</dbReference>
<dbReference type="InterPro" id="IPR023332">
    <property type="entry name" value="Proteasome_alpha-type"/>
</dbReference>
<dbReference type="InterPro" id="IPR033812">
    <property type="entry name" value="Proteasome_alpha_type_5"/>
</dbReference>
<dbReference type="InterPro" id="IPR000426">
    <property type="entry name" value="Proteasome_asu_N"/>
</dbReference>
<dbReference type="InterPro" id="IPR001353">
    <property type="entry name" value="Proteasome_sua/b"/>
</dbReference>
<dbReference type="NCBIfam" id="NF003075">
    <property type="entry name" value="PRK03996.1"/>
    <property type="match status" value="1"/>
</dbReference>
<dbReference type="PANTHER" id="PTHR11599">
    <property type="entry name" value="PROTEASOME SUBUNIT ALPHA/BETA"/>
    <property type="match status" value="1"/>
</dbReference>
<dbReference type="Pfam" id="PF00227">
    <property type="entry name" value="Proteasome"/>
    <property type="match status" value="1"/>
</dbReference>
<dbReference type="Pfam" id="PF10584">
    <property type="entry name" value="Proteasome_A_N"/>
    <property type="match status" value="1"/>
</dbReference>
<dbReference type="SMART" id="SM00948">
    <property type="entry name" value="Proteasome_A_N"/>
    <property type="match status" value="1"/>
</dbReference>
<dbReference type="SUPFAM" id="SSF56235">
    <property type="entry name" value="N-terminal nucleophile aminohydrolases (Ntn hydrolases)"/>
    <property type="match status" value="1"/>
</dbReference>
<dbReference type="PROSITE" id="PS00388">
    <property type="entry name" value="PROTEASOME_ALPHA_1"/>
    <property type="match status" value="1"/>
</dbReference>
<dbReference type="PROSITE" id="PS51475">
    <property type="entry name" value="PROTEASOME_ALPHA_2"/>
    <property type="match status" value="1"/>
</dbReference>
<gene>
    <name type="primary">psmA5</name>
    <name type="ORF">DDB_G0268538</name>
</gene>
<comment type="function">
    <text evidence="1">The proteasome is a multicatalytic proteinase complex which is characterized by its ability to cleave peptides with Arg, Phe, Tyr, Leu, and Glu adjacent to the leaving group at neutral or slightly basic pH. The proteasome has an ATP-dependent proteolytic activity (By similarity).</text>
</comment>
<comment type="subunit">
    <text evidence="1">The 26S proteasome consists of a 20S proteasome core and two 19S regulatory subunits. The 20S proteasome core is composed of 28 subunits that are arranged in four stacked rings, resulting in a barrel-shaped structure. The two end rings are each formed by seven alpha subunits, and the two central rings are each formed by seven beta subunits. The catalytic chamber with the active sites is on the inside of the barrel (By similarity).</text>
</comment>
<comment type="subcellular location">
    <subcellularLocation>
        <location evidence="1">Cytoplasm</location>
    </subcellularLocation>
    <subcellularLocation>
        <location evidence="1">Nucleus</location>
    </subcellularLocation>
</comment>
<comment type="similarity">
    <text evidence="2">Belongs to the peptidase T1A family.</text>
</comment>
<feature type="chain" id="PRO_0000328486" description="Proteasome subunit alpha type-5">
    <location>
        <begin position="1"/>
        <end position="241"/>
    </location>
</feature>
<keyword id="KW-0963">Cytoplasm</keyword>
<keyword id="KW-0539">Nucleus</keyword>
<keyword id="KW-0647">Proteasome</keyword>
<keyword id="KW-1185">Reference proteome</keyword>
<reference key="1">
    <citation type="journal article" date="2005" name="Nature">
        <title>The genome of the social amoeba Dictyostelium discoideum.</title>
        <authorList>
            <person name="Eichinger L."/>
            <person name="Pachebat J.A."/>
            <person name="Gloeckner G."/>
            <person name="Rajandream M.A."/>
            <person name="Sucgang R."/>
            <person name="Berriman M."/>
            <person name="Song J."/>
            <person name="Olsen R."/>
            <person name="Szafranski K."/>
            <person name="Xu Q."/>
            <person name="Tunggal B."/>
            <person name="Kummerfeld S."/>
            <person name="Madera M."/>
            <person name="Konfortov B.A."/>
            <person name="Rivero F."/>
            <person name="Bankier A.T."/>
            <person name="Lehmann R."/>
            <person name="Hamlin N."/>
            <person name="Davies R."/>
            <person name="Gaudet P."/>
            <person name="Fey P."/>
            <person name="Pilcher K."/>
            <person name="Chen G."/>
            <person name="Saunders D."/>
            <person name="Sodergren E.J."/>
            <person name="Davis P."/>
            <person name="Kerhornou A."/>
            <person name="Nie X."/>
            <person name="Hall N."/>
            <person name="Anjard C."/>
            <person name="Hemphill L."/>
            <person name="Bason N."/>
            <person name="Farbrother P."/>
            <person name="Desany B."/>
            <person name="Just E."/>
            <person name="Morio T."/>
            <person name="Rost R."/>
            <person name="Churcher C.M."/>
            <person name="Cooper J."/>
            <person name="Haydock S."/>
            <person name="van Driessche N."/>
            <person name="Cronin A."/>
            <person name="Goodhead I."/>
            <person name="Muzny D.M."/>
            <person name="Mourier T."/>
            <person name="Pain A."/>
            <person name="Lu M."/>
            <person name="Harper D."/>
            <person name="Lindsay R."/>
            <person name="Hauser H."/>
            <person name="James K.D."/>
            <person name="Quiles M."/>
            <person name="Madan Babu M."/>
            <person name="Saito T."/>
            <person name="Buchrieser C."/>
            <person name="Wardroper A."/>
            <person name="Felder M."/>
            <person name="Thangavelu M."/>
            <person name="Johnson D."/>
            <person name="Knights A."/>
            <person name="Loulseged H."/>
            <person name="Mungall K.L."/>
            <person name="Oliver K."/>
            <person name="Price C."/>
            <person name="Quail M.A."/>
            <person name="Urushihara H."/>
            <person name="Hernandez J."/>
            <person name="Rabbinowitsch E."/>
            <person name="Steffen D."/>
            <person name="Sanders M."/>
            <person name="Ma J."/>
            <person name="Kohara Y."/>
            <person name="Sharp S."/>
            <person name="Simmonds M.N."/>
            <person name="Spiegler S."/>
            <person name="Tivey A."/>
            <person name="Sugano S."/>
            <person name="White B."/>
            <person name="Walker D."/>
            <person name="Woodward J.R."/>
            <person name="Winckler T."/>
            <person name="Tanaka Y."/>
            <person name="Shaulsky G."/>
            <person name="Schleicher M."/>
            <person name="Weinstock G.M."/>
            <person name="Rosenthal A."/>
            <person name="Cox E.C."/>
            <person name="Chisholm R.L."/>
            <person name="Gibbs R.A."/>
            <person name="Loomis W.F."/>
            <person name="Platzer M."/>
            <person name="Kay R.R."/>
            <person name="Williams J.G."/>
            <person name="Dear P.H."/>
            <person name="Noegel A.A."/>
            <person name="Barrell B.G."/>
            <person name="Kuspa A."/>
        </authorList>
    </citation>
    <scope>NUCLEOTIDE SEQUENCE [LARGE SCALE GENOMIC DNA]</scope>
    <source>
        <strain>AX4</strain>
    </source>
</reference>
<protein>
    <recommendedName>
        <fullName>Proteasome subunit alpha type-5</fullName>
    </recommendedName>
</protein>
<accession>Q55G04</accession>